<proteinExistence type="inferred from homology"/>
<keyword id="KW-0004">4Fe-4S</keyword>
<keyword id="KW-0249">Electron transport</keyword>
<keyword id="KW-0408">Iron</keyword>
<keyword id="KW-0411">Iron-sulfur</keyword>
<keyword id="KW-0479">Metal-binding</keyword>
<keyword id="KW-0677">Repeat</keyword>
<keyword id="KW-0813">Transport</keyword>
<accession>B9IUP4</accession>
<reference key="1">
    <citation type="journal article" date="2009" name="J. Bacteriol.">
        <title>Complete genome sequence of the extremophilic Bacillus cereus strain Q1 with industrial applications.</title>
        <authorList>
            <person name="Xiong Z."/>
            <person name="Jiang Y."/>
            <person name="Qi D."/>
            <person name="Lu H."/>
            <person name="Yang F."/>
            <person name="Yang J."/>
            <person name="Chen L."/>
            <person name="Sun L."/>
            <person name="Xu X."/>
            <person name="Xue Y."/>
            <person name="Zhu Y."/>
            <person name="Jin Q."/>
        </authorList>
    </citation>
    <scope>NUCLEOTIDE SEQUENCE [LARGE SCALE GENOMIC DNA]</scope>
    <source>
        <strain>Q1</strain>
    </source>
</reference>
<protein>
    <recommendedName>
        <fullName evidence="1">Lactate utilization protein B</fullName>
    </recommendedName>
</protein>
<organism>
    <name type="scientific">Bacillus cereus (strain Q1)</name>
    <dbReference type="NCBI Taxonomy" id="361100"/>
    <lineage>
        <taxon>Bacteria</taxon>
        <taxon>Bacillati</taxon>
        <taxon>Bacillota</taxon>
        <taxon>Bacilli</taxon>
        <taxon>Bacillales</taxon>
        <taxon>Bacillaceae</taxon>
        <taxon>Bacillus</taxon>
        <taxon>Bacillus cereus group</taxon>
    </lineage>
</organism>
<dbReference type="EMBL" id="CP000227">
    <property type="protein sequence ID" value="ACM11805.1"/>
    <property type="molecule type" value="Genomic_DNA"/>
</dbReference>
<dbReference type="KEGG" id="bcq:BCQ_1377"/>
<dbReference type="HOGENOM" id="CLU_027059_2_0_9"/>
<dbReference type="Proteomes" id="UP000000441">
    <property type="component" value="Chromosome"/>
</dbReference>
<dbReference type="GO" id="GO:0051539">
    <property type="term" value="F:4 iron, 4 sulfur cluster binding"/>
    <property type="evidence" value="ECO:0007669"/>
    <property type="project" value="UniProtKB-KW"/>
</dbReference>
<dbReference type="GO" id="GO:0046872">
    <property type="term" value="F:metal ion binding"/>
    <property type="evidence" value="ECO:0007669"/>
    <property type="project" value="UniProtKB-KW"/>
</dbReference>
<dbReference type="GO" id="GO:0006089">
    <property type="term" value="P:lactate metabolic process"/>
    <property type="evidence" value="ECO:0007669"/>
    <property type="project" value="UniProtKB-UniRule"/>
</dbReference>
<dbReference type="Gene3D" id="1.10.1060.10">
    <property type="entry name" value="Alpha-helical ferredoxin"/>
    <property type="match status" value="1"/>
</dbReference>
<dbReference type="Gene3D" id="3.40.50.10420">
    <property type="entry name" value="NagB/RpiA/CoA transferase-like"/>
    <property type="match status" value="1"/>
</dbReference>
<dbReference type="HAMAP" id="MF_02103">
    <property type="entry name" value="LutB"/>
    <property type="match status" value="1"/>
</dbReference>
<dbReference type="InterPro" id="IPR017896">
    <property type="entry name" value="4Fe4S_Fe-S-bd"/>
</dbReference>
<dbReference type="InterPro" id="IPR017900">
    <property type="entry name" value="4Fe4S_Fe_S_CS"/>
</dbReference>
<dbReference type="InterPro" id="IPR024185">
    <property type="entry name" value="FTHF_cligase-like_sf"/>
</dbReference>
<dbReference type="InterPro" id="IPR009051">
    <property type="entry name" value="Helical_ferredxn"/>
</dbReference>
<dbReference type="InterPro" id="IPR003741">
    <property type="entry name" value="LUD_dom"/>
</dbReference>
<dbReference type="InterPro" id="IPR022825">
    <property type="entry name" value="LutB"/>
</dbReference>
<dbReference type="InterPro" id="IPR004452">
    <property type="entry name" value="LutB/LldF"/>
</dbReference>
<dbReference type="InterPro" id="IPR024569">
    <property type="entry name" value="LutB_C"/>
</dbReference>
<dbReference type="InterPro" id="IPR037171">
    <property type="entry name" value="NagB/RpiA_transferase-like"/>
</dbReference>
<dbReference type="NCBIfam" id="TIGR00273">
    <property type="entry name" value="LutB/LldF family L-lactate oxidation iron-sulfur protein"/>
    <property type="match status" value="1"/>
</dbReference>
<dbReference type="PANTHER" id="PTHR47153">
    <property type="entry name" value="LACTATE UTILIZATION PROTEIN B"/>
    <property type="match status" value="1"/>
</dbReference>
<dbReference type="PANTHER" id="PTHR47153:SF2">
    <property type="entry name" value="LACTATE UTILIZATION PROTEIN B"/>
    <property type="match status" value="1"/>
</dbReference>
<dbReference type="Pfam" id="PF13183">
    <property type="entry name" value="Fer4_8"/>
    <property type="match status" value="1"/>
</dbReference>
<dbReference type="Pfam" id="PF02589">
    <property type="entry name" value="LUD_dom"/>
    <property type="match status" value="1"/>
</dbReference>
<dbReference type="Pfam" id="PF11870">
    <property type="entry name" value="LutB_C"/>
    <property type="match status" value="1"/>
</dbReference>
<dbReference type="SUPFAM" id="SSF46548">
    <property type="entry name" value="alpha-helical ferredoxin"/>
    <property type="match status" value="1"/>
</dbReference>
<dbReference type="SUPFAM" id="SSF100950">
    <property type="entry name" value="NagB/RpiA/CoA transferase-like"/>
    <property type="match status" value="1"/>
</dbReference>
<dbReference type="PROSITE" id="PS00198">
    <property type="entry name" value="4FE4S_FER_1"/>
    <property type="match status" value="1"/>
</dbReference>
<feature type="chain" id="PRO_0000383970" description="Lactate utilization protein B">
    <location>
        <begin position="1"/>
        <end position="473"/>
    </location>
</feature>
<feature type="domain" description="4Fe-4S ferredoxin-type 1" evidence="1">
    <location>
        <begin position="302"/>
        <end position="332"/>
    </location>
</feature>
<feature type="domain" description="4Fe-4S ferredoxin-type 2" evidence="1">
    <location>
        <begin position="351"/>
        <end position="380"/>
    </location>
</feature>
<feature type="binding site" evidence="1">
    <location>
        <position position="311"/>
    </location>
    <ligand>
        <name>[4Fe-4S] cluster</name>
        <dbReference type="ChEBI" id="CHEBI:49883"/>
        <label>1</label>
    </ligand>
</feature>
<feature type="binding site" evidence="1">
    <location>
        <position position="314"/>
    </location>
    <ligand>
        <name>[4Fe-4S] cluster</name>
        <dbReference type="ChEBI" id="CHEBI:49883"/>
        <label>1</label>
    </ligand>
</feature>
<feature type="binding site" evidence="1">
    <location>
        <position position="317"/>
    </location>
    <ligand>
        <name>[4Fe-4S] cluster</name>
        <dbReference type="ChEBI" id="CHEBI:49883"/>
        <label>1</label>
    </ligand>
</feature>
<feature type="binding site" evidence="1">
    <location>
        <position position="321"/>
    </location>
    <ligand>
        <name>[4Fe-4S] cluster</name>
        <dbReference type="ChEBI" id="CHEBI:49883"/>
        <label>2</label>
    </ligand>
</feature>
<feature type="binding site" evidence="1">
    <location>
        <position position="364"/>
    </location>
    <ligand>
        <name>[4Fe-4S] cluster</name>
        <dbReference type="ChEBI" id="CHEBI:49883"/>
        <label>2</label>
    </ligand>
</feature>
<feature type="binding site" evidence="1">
    <location>
        <position position="367"/>
    </location>
    <ligand>
        <name>[4Fe-4S] cluster</name>
        <dbReference type="ChEBI" id="CHEBI:49883"/>
        <label>2</label>
    </ligand>
</feature>
<feature type="binding site" evidence="1">
    <location>
        <position position="371"/>
    </location>
    <ligand>
        <name>[4Fe-4S] cluster</name>
        <dbReference type="ChEBI" id="CHEBI:49883"/>
        <label>1</label>
    </ligand>
</feature>
<name>LUTB_BACCQ</name>
<evidence type="ECO:0000255" key="1">
    <source>
        <dbReference type="HAMAP-Rule" id="MF_02103"/>
    </source>
</evidence>
<comment type="function">
    <text evidence="1">Is involved in L-lactate degradation and allows cells to grow with lactate as the sole carbon source. Has probably a role as an electron transporter during oxidation of L-lactate.</text>
</comment>
<comment type="similarity">
    <text evidence="1">Belongs to the LutB/YkgF family.</text>
</comment>
<sequence>MSMKISEKKFNDRVGDGIQDSFMRGAVSSAQTRLYTNRLKAADELGNWEEWRELGEEIRQHTLENLDYYLMQLSENVSKRGGHVYFAKTKEEAAKYIQDVAKKKQAKKVVKSKSMVTEEISMNHALEEIGCEVLESDLGEYILQVDNDPPSHIIAPALHKNRTQIRDVFKEKLGYENSDDPYEMTKFVRKQLREKFMDAEIGVTGCNFAVANTGSLCLVTNEGNADLVMSIPKTQIAVMGMERMVPTMEELDVLVGLLCRSAVGQKLTSYVTVAGPIQEEEVDGPEEFHLVVVDNGRSQILGSEFRQVLQCIRCAACVNVCPVYRHVGGHSYGSIYSGPIGAVLTPLLGGYDDYKELPYASSLCGACTEACPVKIPLHDLLLKHRQVIVEQEGRAPLAEKLAMKMFSMGASSAALYKMGSKMAPAAMSPFTSGNRVSKGVGPLKNWTDIREFPAPSKERFRDWYKDHKKGGDK</sequence>
<gene>
    <name evidence="1" type="primary">lutB</name>
    <name type="ordered locus">BCQ_1377</name>
</gene>